<evidence type="ECO:0000255" key="1">
    <source>
        <dbReference type="HAMAP-Rule" id="MF_00037"/>
    </source>
</evidence>
<sequence>MLILPIVKGEYKKDYSLKHLTWFKVGGNAEIFFKPFDSEDLASFLIQNKQKLPITTFGAGSNIIIRDGGIEGVTIKLGQNFSNIEFIDEHLIVGSSCLNYNLAKFCQANAITGFEFLVGIPGTIGGGVVMNAGAYDSEFKDIIVKIEAIDFAGNFLTFTNEEIGFKYRSNNLPKDLIILKAVFKVNKGDSENILLRMNEINNARSATQPIKERTGGSTFANPEGLKSWELIDKAGLRGYRIGGASMSELHCNFMINNGDATAKDLEDLGDFVRQKVFEDSGVELKWEIKRLGRYV</sequence>
<feature type="chain" id="PRO_0000224714" description="UDP-N-acetylenolpyruvoylglucosamine reductase">
    <location>
        <begin position="1"/>
        <end position="295"/>
    </location>
</feature>
<feature type="domain" description="FAD-binding PCMH-type" evidence="1">
    <location>
        <begin position="24"/>
        <end position="188"/>
    </location>
</feature>
<feature type="active site" evidence="1">
    <location>
        <position position="168"/>
    </location>
</feature>
<feature type="active site" description="Proton donor" evidence="1">
    <location>
        <position position="217"/>
    </location>
</feature>
<feature type="active site" evidence="1">
    <location>
        <position position="287"/>
    </location>
</feature>
<proteinExistence type="inferred from homology"/>
<organism>
    <name type="scientific">Rickettsia felis (strain ATCC VR-1525 / URRWXCal2)</name>
    <name type="common">Rickettsia azadi</name>
    <dbReference type="NCBI Taxonomy" id="315456"/>
    <lineage>
        <taxon>Bacteria</taxon>
        <taxon>Pseudomonadati</taxon>
        <taxon>Pseudomonadota</taxon>
        <taxon>Alphaproteobacteria</taxon>
        <taxon>Rickettsiales</taxon>
        <taxon>Rickettsiaceae</taxon>
        <taxon>Rickettsieae</taxon>
        <taxon>Rickettsia</taxon>
        <taxon>spotted fever group</taxon>
    </lineage>
</organism>
<name>MURB_RICFE</name>
<gene>
    <name evidence="1" type="primary">murB</name>
    <name type="ordered locus">RF_1036</name>
</gene>
<keyword id="KW-0131">Cell cycle</keyword>
<keyword id="KW-0132">Cell division</keyword>
<keyword id="KW-0133">Cell shape</keyword>
<keyword id="KW-0961">Cell wall biogenesis/degradation</keyword>
<keyword id="KW-0963">Cytoplasm</keyword>
<keyword id="KW-0274">FAD</keyword>
<keyword id="KW-0285">Flavoprotein</keyword>
<keyword id="KW-0521">NADP</keyword>
<keyword id="KW-0560">Oxidoreductase</keyword>
<keyword id="KW-0573">Peptidoglycan synthesis</keyword>
<reference key="1">
    <citation type="journal article" date="2005" name="PLoS Biol.">
        <title>The genome sequence of Rickettsia felis identifies the first putative conjugative plasmid in an obligate intracellular parasite.</title>
        <authorList>
            <person name="Ogata H."/>
            <person name="Renesto P."/>
            <person name="Audic S."/>
            <person name="Robert C."/>
            <person name="Blanc G."/>
            <person name="Fournier P.-E."/>
            <person name="Parinello H."/>
            <person name="Claverie J.-M."/>
            <person name="Raoult D."/>
        </authorList>
    </citation>
    <scope>NUCLEOTIDE SEQUENCE [LARGE SCALE GENOMIC DNA]</scope>
    <source>
        <strain>ATCC VR-1525 / URRWXCal2</strain>
    </source>
</reference>
<dbReference type="EC" id="1.3.1.98" evidence="1"/>
<dbReference type="EMBL" id="CP000053">
    <property type="protein sequence ID" value="AAY61887.1"/>
    <property type="molecule type" value="Genomic_DNA"/>
</dbReference>
<dbReference type="SMR" id="Q4UKP0"/>
<dbReference type="STRING" id="315456.RF_1036"/>
<dbReference type="KEGG" id="rfe:RF_1036"/>
<dbReference type="eggNOG" id="COG0812">
    <property type="taxonomic scope" value="Bacteria"/>
</dbReference>
<dbReference type="HOGENOM" id="CLU_035304_1_0_5"/>
<dbReference type="OrthoDB" id="9804753at2"/>
<dbReference type="UniPathway" id="UPA00219"/>
<dbReference type="Proteomes" id="UP000008548">
    <property type="component" value="Chromosome"/>
</dbReference>
<dbReference type="GO" id="GO:0005829">
    <property type="term" value="C:cytosol"/>
    <property type="evidence" value="ECO:0007669"/>
    <property type="project" value="TreeGrafter"/>
</dbReference>
<dbReference type="GO" id="GO:0071949">
    <property type="term" value="F:FAD binding"/>
    <property type="evidence" value="ECO:0007669"/>
    <property type="project" value="InterPro"/>
</dbReference>
<dbReference type="GO" id="GO:0008762">
    <property type="term" value="F:UDP-N-acetylmuramate dehydrogenase activity"/>
    <property type="evidence" value="ECO:0007669"/>
    <property type="project" value="UniProtKB-UniRule"/>
</dbReference>
<dbReference type="GO" id="GO:0051301">
    <property type="term" value="P:cell division"/>
    <property type="evidence" value="ECO:0007669"/>
    <property type="project" value="UniProtKB-KW"/>
</dbReference>
<dbReference type="GO" id="GO:0071555">
    <property type="term" value="P:cell wall organization"/>
    <property type="evidence" value="ECO:0007669"/>
    <property type="project" value="UniProtKB-KW"/>
</dbReference>
<dbReference type="GO" id="GO:0009252">
    <property type="term" value="P:peptidoglycan biosynthetic process"/>
    <property type="evidence" value="ECO:0007669"/>
    <property type="project" value="UniProtKB-UniRule"/>
</dbReference>
<dbReference type="GO" id="GO:0008360">
    <property type="term" value="P:regulation of cell shape"/>
    <property type="evidence" value="ECO:0007669"/>
    <property type="project" value="UniProtKB-KW"/>
</dbReference>
<dbReference type="Gene3D" id="3.30.465.10">
    <property type="match status" value="1"/>
</dbReference>
<dbReference type="Gene3D" id="3.90.78.10">
    <property type="entry name" value="UDP-N-acetylenolpyruvoylglucosamine reductase, C-terminal domain"/>
    <property type="match status" value="1"/>
</dbReference>
<dbReference type="Gene3D" id="3.30.43.10">
    <property type="entry name" value="Uridine Diphospho-n-acetylenolpyruvylglucosamine Reductase, domain 2"/>
    <property type="match status" value="1"/>
</dbReference>
<dbReference type="HAMAP" id="MF_00037">
    <property type="entry name" value="MurB"/>
    <property type="match status" value="1"/>
</dbReference>
<dbReference type="InterPro" id="IPR016166">
    <property type="entry name" value="FAD-bd_PCMH"/>
</dbReference>
<dbReference type="InterPro" id="IPR036318">
    <property type="entry name" value="FAD-bd_PCMH-like_sf"/>
</dbReference>
<dbReference type="InterPro" id="IPR016167">
    <property type="entry name" value="FAD-bd_PCMH_sub1"/>
</dbReference>
<dbReference type="InterPro" id="IPR016169">
    <property type="entry name" value="FAD-bd_PCMH_sub2"/>
</dbReference>
<dbReference type="InterPro" id="IPR003170">
    <property type="entry name" value="MurB"/>
</dbReference>
<dbReference type="InterPro" id="IPR011601">
    <property type="entry name" value="MurB_C"/>
</dbReference>
<dbReference type="InterPro" id="IPR036635">
    <property type="entry name" value="MurB_C_sf"/>
</dbReference>
<dbReference type="InterPro" id="IPR006094">
    <property type="entry name" value="Oxid_FAD_bind_N"/>
</dbReference>
<dbReference type="NCBIfam" id="TIGR00179">
    <property type="entry name" value="murB"/>
    <property type="match status" value="1"/>
</dbReference>
<dbReference type="NCBIfam" id="NF010480">
    <property type="entry name" value="PRK13905.1"/>
    <property type="match status" value="1"/>
</dbReference>
<dbReference type="PANTHER" id="PTHR21071">
    <property type="entry name" value="UDP-N-ACETYLENOLPYRUVOYLGLUCOSAMINE REDUCTASE"/>
    <property type="match status" value="1"/>
</dbReference>
<dbReference type="PANTHER" id="PTHR21071:SF4">
    <property type="entry name" value="UDP-N-ACETYLENOLPYRUVOYLGLUCOSAMINE REDUCTASE"/>
    <property type="match status" value="1"/>
</dbReference>
<dbReference type="Pfam" id="PF01565">
    <property type="entry name" value="FAD_binding_4"/>
    <property type="match status" value="1"/>
</dbReference>
<dbReference type="Pfam" id="PF02873">
    <property type="entry name" value="MurB_C"/>
    <property type="match status" value="1"/>
</dbReference>
<dbReference type="SUPFAM" id="SSF56176">
    <property type="entry name" value="FAD-binding/transporter-associated domain-like"/>
    <property type="match status" value="1"/>
</dbReference>
<dbReference type="SUPFAM" id="SSF56194">
    <property type="entry name" value="Uridine diphospho-N-Acetylenolpyruvylglucosamine reductase, MurB, C-terminal domain"/>
    <property type="match status" value="1"/>
</dbReference>
<dbReference type="PROSITE" id="PS51387">
    <property type="entry name" value="FAD_PCMH"/>
    <property type="match status" value="1"/>
</dbReference>
<protein>
    <recommendedName>
        <fullName evidence="1">UDP-N-acetylenolpyruvoylglucosamine reductase</fullName>
        <ecNumber evidence="1">1.3.1.98</ecNumber>
    </recommendedName>
    <alternativeName>
        <fullName evidence="1">UDP-N-acetylmuramate dehydrogenase</fullName>
    </alternativeName>
</protein>
<comment type="function">
    <text evidence="1">Cell wall formation.</text>
</comment>
<comment type="catalytic activity">
    <reaction evidence="1">
        <text>UDP-N-acetyl-alpha-D-muramate + NADP(+) = UDP-N-acetyl-3-O-(1-carboxyvinyl)-alpha-D-glucosamine + NADPH + H(+)</text>
        <dbReference type="Rhea" id="RHEA:12248"/>
        <dbReference type="ChEBI" id="CHEBI:15378"/>
        <dbReference type="ChEBI" id="CHEBI:57783"/>
        <dbReference type="ChEBI" id="CHEBI:58349"/>
        <dbReference type="ChEBI" id="CHEBI:68483"/>
        <dbReference type="ChEBI" id="CHEBI:70757"/>
        <dbReference type="EC" id="1.3.1.98"/>
    </reaction>
</comment>
<comment type="cofactor">
    <cofactor evidence="1">
        <name>FAD</name>
        <dbReference type="ChEBI" id="CHEBI:57692"/>
    </cofactor>
</comment>
<comment type="pathway">
    <text evidence="1">Cell wall biogenesis; peptidoglycan biosynthesis.</text>
</comment>
<comment type="subcellular location">
    <subcellularLocation>
        <location evidence="1">Cytoplasm</location>
    </subcellularLocation>
</comment>
<comment type="similarity">
    <text evidence="1">Belongs to the MurB family.</text>
</comment>
<accession>Q4UKP0</accession>